<keyword id="KW-0067">ATP-binding</keyword>
<keyword id="KW-0436">Ligase</keyword>
<keyword id="KW-0547">Nucleotide-binding</keyword>
<keyword id="KW-1185">Reference proteome</keyword>
<keyword id="KW-0833">Ubl conjugation pathway</keyword>
<protein>
    <recommendedName>
        <fullName>Ubiquitin-like modifier-activating enzyme 1 Y</fullName>
        <ecNumber evidence="2">6.2.1.45</ecNumber>
    </recommendedName>
    <alternativeName>
        <fullName>Ubiquitin-activating enzyme E1</fullName>
    </alternativeName>
    <alternativeName>
        <fullName>Ubiquitin-activating enzyme E1 Y</fullName>
    </alternativeName>
</protein>
<reference key="1">
    <citation type="journal article" date="2000" name="Mamm. Genome">
        <title>The ubiquitin-activating enzyme E1 homologous genes on the mouse Y Chromosome represent one functional gene and six partial pseudogenes.</title>
        <authorList>
            <person name="Levy N."/>
            <person name="Navarro A."/>
            <person name="Bishop C.E."/>
            <person name="Mitchell M.J."/>
        </authorList>
    </citation>
    <scope>NUCLEOTIDE SEQUENCE [GENOMIC DNA / MRNA]</scope>
    <source>
        <strain>C3H/HeJ</strain>
        <strain>C57BL/6J</strain>
    </source>
</reference>
<reference key="2">
    <citation type="journal article" date="2005" name="Science">
        <title>The transcriptional landscape of the mammalian genome.</title>
        <authorList>
            <person name="Carninci P."/>
            <person name="Kasukawa T."/>
            <person name="Katayama S."/>
            <person name="Gough J."/>
            <person name="Frith M.C."/>
            <person name="Maeda N."/>
            <person name="Oyama R."/>
            <person name="Ravasi T."/>
            <person name="Lenhard B."/>
            <person name="Wells C."/>
            <person name="Kodzius R."/>
            <person name="Shimokawa K."/>
            <person name="Bajic V.B."/>
            <person name="Brenner S.E."/>
            <person name="Batalov S."/>
            <person name="Forrest A.R."/>
            <person name="Zavolan M."/>
            <person name="Davis M.J."/>
            <person name="Wilming L.G."/>
            <person name="Aidinis V."/>
            <person name="Allen J.E."/>
            <person name="Ambesi-Impiombato A."/>
            <person name="Apweiler R."/>
            <person name="Aturaliya R.N."/>
            <person name="Bailey T.L."/>
            <person name="Bansal M."/>
            <person name="Baxter L."/>
            <person name="Beisel K.W."/>
            <person name="Bersano T."/>
            <person name="Bono H."/>
            <person name="Chalk A.M."/>
            <person name="Chiu K.P."/>
            <person name="Choudhary V."/>
            <person name="Christoffels A."/>
            <person name="Clutterbuck D.R."/>
            <person name="Crowe M.L."/>
            <person name="Dalla E."/>
            <person name="Dalrymple B.P."/>
            <person name="de Bono B."/>
            <person name="Della Gatta G."/>
            <person name="di Bernardo D."/>
            <person name="Down T."/>
            <person name="Engstrom P."/>
            <person name="Fagiolini M."/>
            <person name="Faulkner G."/>
            <person name="Fletcher C.F."/>
            <person name="Fukushima T."/>
            <person name="Furuno M."/>
            <person name="Futaki S."/>
            <person name="Gariboldi M."/>
            <person name="Georgii-Hemming P."/>
            <person name="Gingeras T.R."/>
            <person name="Gojobori T."/>
            <person name="Green R.E."/>
            <person name="Gustincich S."/>
            <person name="Harbers M."/>
            <person name="Hayashi Y."/>
            <person name="Hensch T.K."/>
            <person name="Hirokawa N."/>
            <person name="Hill D."/>
            <person name="Huminiecki L."/>
            <person name="Iacono M."/>
            <person name="Ikeo K."/>
            <person name="Iwama A."/>
            <person name="Ishikawa T."/>
            <person name="Jakt M."/>
            <person name="Kanapin A."/>
            <person name="Katoh M."/>
            <person name="Kawasawa Y."/>
            <person name="Kelso J."/>
            <person name="Kitamura H."/>
            <person name="Kitano H."/>
            <person name="Kollias G."/>
            <person name="Krishnan S.P."/>
            <person name="Kruger A."/>
            <person name="Kummerfeld S.K."/>
            <person name="Kurochkin I.V."/>
            <person name="Lareau L.F."/>
            <person name="Lazarevic D."/>
            <person name="Lipovich L."/>
            <person name="Liu J."/>
            <person name="Liuni S."/>
            <person name="McWilliam S."/>
            <person name="Madan Babu M."/>
            <person name="Madera M."/>
            <person name="Marchionni L."/>
            <person name="Matsuda H."/>
            <person name="Matsuzawa S."/>
            <person name="Miki H."/>
            <person name="Mignone F."/>
            <person name="Miyake S."/>
            <person name="Morris K."/>
            <person name="Mottagui-Tabar S."/>
            <person name="Mulder N."/>
            <person name="Nakano N."/>
            <person name="Nakauchi H."/>
            <person name="Ng P."/>
            <person name="Nilsson R."/>
            <person name="Nishiguchi S."/>
            <person name="Nishikawa S."/>
            <person name="Nori F."/>
            <person name="Ohara O."/>
            <person name="Okazaki Y."/>
            <person name="Orlando V."/>
            <person name="Pang K.C."/>
            <person name="Pavan W.J."/>
            <person name="Pavesi G."/>
            <person name="Pesole G."/>
            <person name="Petrovsky N."/>
            <person name="Piazza S."/>
            <person name="Reed J."/>
            <person name="Reid J.F."/>
            <person name="Ring B.Z."/>
            <person name="Ringwald M."/>
            <person name="Rost B."/>
            <person name="Ruan Y."/>
            <person name="Salzberg S.L."/>
            <person name="Sandelin A."/>
            <person name="Schneider C."/>
            <person name="Schoenbach C."/>
            <person name="Sekiguchi K."/>
            <person name="Semple C.A."/>
            <person name="Seno S."/>
            <person name="Sessa L."/>
            <person name="Sheng Y."/>
            <person name="Shibata Y."/>
            <person name="Shimada H."/>
            <person name="Shimada K."/>
            <person name="Silva D."/>
            <person name="Sinclair B."/>
            <person name="Sperling S."/>
            <person name="Stupka E."/>
            <person name="Sugiura K."/>
            <person name="Sultana R."/>
            <person name="Takenaka Y."/>
            <person name="Taki K."/>
            <person name="Tammoja K."/>
            <person name="Tan S.L."/>
            <person name="Tang S."/>
            <person name="Taylor M.S."/>
            <person name="Tegner J."/>
            <person name="Teichmann S.A."/>
            <person name="Ueda H.R."/>
            <person name="van Nimwegen E."/>
            <person name="Verardo R."/>
            <person name="Wei C.L."/>
            <person name="Yagi K."/>
            <person name="Yamanishi H."/>
            <person name="Zabarovsky E."/>
            <person name="Zhu S."/>
            <person name="Zimmer A."/>
            <person name="Hide W."/>
            <person name="Bult C."/>
            <person name="Grimmond S.M."/>
            <person name="Teasdale R.D."/>
            <person name="Liu E.T."/>
            <person name="Brusic V."/>
            <person name="Quackenbush J."/>
            <person name="Wahlestedt C."/>
            <person name="Mattick J.S."/>
            <person name="Hume D.A."/>
            <person name="Kai C."/>
            <person name="Sasaki D."/>
            <person name="Tomaru Y."/>
            <person name="Fukuda S."/>
            <person name="Kanamori-Katayama M."/>
            <person name="Suzuki M."/>
            <person name="Aoki J."/>
            <person name="Arakawa T."/>
            <person name="Iida J."/>
            <person name="Imamura K."/>
            <person name="Itoh M."/>
            <person name="Kato T."/>
            <person name="Kawaji H."/>
            <person name="Kawagashira N."/>
            <person name="Kawashima T."/>
            <person name="Kojima M."/>
            <person name="Kondo S."/>
            <person name="Konno H."/>
            <person name="Nakano K."/>
            <person name="Ninomiya N."/>
            <person name="Nishio T."/>
            <person name="Okada M."/>
            <person name="Plessy C."/>
            <person name="Shibata K."/>
            <person name="Shiraki T."/>
            <person name="Suzuki S."/>
            <person name="Tagami M."/>
            <person name="Waki K."/>
            <person name="Watahiki A."/>
            <person name="Okamura-Oho Y."/>
            <person name="Suzuki H."/>
            <person name="Kawai J."/>
            <person name="Hayashizaki Y."/>
        </authorList>
    </citation>
    <scope>NUCLEOTIDE SEQUENCE [LARGE SCALE MRNA]</scope>
    <source>
        <strain>C57BL/6J</strain>
        <tissue>Testis</tissue>
    </source>
</reference>
<reference key="3">
    <citation type="journal article" date="1991" name="Nature">
        <title>Homology of a candidate spermatogenic gene from the mouse Y chromosome to the ubiquitin-activating enzyme E1.</title>
        <authorList>
            <person name="Mitchell M.J."/>
            <person name="Woods D.R."/>
            <person name="Tucker P.K."/>
            <person name="Opp J.S."/>
            <person name="Bishop C.E."/>
        </authorList>
    </citation>
    <scope>NUCLEOTIDE SEQUENCE [MRNA] OF 617-1058</scope>
    <source>
        <strain>C57BL/6J</strain>
        <tissue>Testis</tissue>
    </source>
</reference>
<reference key="4">
    <citation type="journal article" date="1995" name="J. Mol. Evol.">
        <title>Estimating the intensity of male-driven evolution in rodents by using X-linked and Y-linked Ube 1 genes and pseudogenes.</title>
        <authorList>
            <person name="Chang B.H.-J."/>
            <person name="Li W.H."/>
        </authorList>
    </citation>
    <scope>NUCLEOTIDE SEQUENCE [GENOMIC DNA] OF 654-762</scope>
    <source>
        <strain>BALB/c AnCr</strain>
        <tissue>Liver</tissue>
    </source>
</reference>
<reference key="5">
    <citation type="journal article" date="1996" name="Dev. Biol.">
        <title>Transcriptional analysis of the candidate spermatogenesis gene Ube1y and of the closely related Ube1x shows that they are coexpressed in spermatogonia and spermatids but are repressed in pachytene spermatocytes.</title>
        <authorList>
            <person name="Odorisio T."/>
            <person name="Mahadevaiah S.K."/>
            <person name="McCarrey J.R."/>
            <person name="Burgoyne P.S."/>
        </authorList>
    </citation>
    <scope>TISSUE SPECIFICITY</scope>
    <scope>DEVELOPMENTAL STAGE</scope>
</reference>
<reference key="6">
    <citation type="journal article" date="2010" name="Cell">
        <title>A tissue-specific atlas of mouse protein phosphorylation and expression.</title>
        <authorList>
            <person name="Huttlin E.L."/>
            <person name="Jedrychowski M.P."/>
            <person name="Elias J.E."/>
            <person name="Goswami T."/>
            <person name="Rad R."/>
            <person name="Beausoleil S.A."/>
            <person name="Villen J."/>
            <person name="Haas W."/>
            <person name="Sowa M.E."/>
            <person name="Gygi S.P."/>
        </authorList>
    </citation>
    <scope>IDENTIFICATION BY MASS SPECTROMETRY [LARGE SCALE ANALYSIS]</scope>
    <source>
        <tissue>Testis</tissue>
    </source>
</reference>
<name>UBA1Y_MOUSE</name>
<feature type="chain" id="PRO_0000194939" description="Ubiquitin-like modifier-activating enzyme 1 Y">
    <location>
        <begin position="1"/>
        <end position="1058"/>
    </location>
</feature>
<feature type="region of interest" description="Disordered" evidence="5">
    <location>
        <begin position="1"/>
        <end position="22"/>
    </location>
</feature>
<feature type="active site" description="Glycyl thioester intermediate" evidence="4">
    <location>
        <position position="631"/>
    </location>
</feature>
<feature type="binding site" evidence="3">
    <location>
        <position position="477"/>
    </location>
    <ligand>
        <name>ATP</name>
        <dbReference type="ChEBI" id="CHEBI:30616"/>
    </ligand>
</feature>
<feature type="binding site" evidence="3">
    <location>
        <position position="503"/>
    </location>
    <ligand>
        <name>ATP</name>
        <dbReference type="ChEBI" id="CHEBI:30616"/>
    </ligand>
</feature>
<feature type="binding site" evidence="3">
    <location>
        <position position="514"/>
    </location>
    <ligand>
        <name>ATP</name>
        <dbReference type="ChEBI" id="CHEBI:30616"/>
    </ligand>
</feature>
<feature type="binding site" evidence="3">
    <location>
        <position position="527"/>
    </location>
    <ligand>
        <name>ATP</name>
        <dbReference type="ChEBI" id="CHEBI:30616"/>
    </ligand>
</feature>
<feature type="binding site" evidence="3">
    <location>
        <begin position="575"/>
        <end position="576"/>
    </location>
    <ligand>
        <name>ATP</name>
        <dbReference type="ChEBI" id="CHEBI:30616"/>
    </ligand>
</feature>
<feature type="sequence conflict" description="In Ref. 1; AAF00149." evidence="7" ref="1">
    <original>G</original>
    <variation>C</variation>
    <location>
        <position position="93"/>
    </location>
</feature>
<feature type="sequence conflict" description="In Ref. 2; BAC26749." evidence="7" ref="2">
    <original>E</original>
    <variation>V</variation>
    <location>
        <position position="498"/>
    </location>
</feature>
<feature type="sequence conflict" description="In Ref. 3; CAA44466." evidence="7" ref="3">
    <original>N</original>
    <variation>Y</variation>
    <location>
        <position position="635"/>
    </location>
</feature>
<feature type="sequence conflict" description="In Ref. 4; AAC52170." evidence="7" ref="4">
    <original>W</original>
    <variation>R</variation>
    <location>
        <position position="713"/>
    </location>
</feature>
<feature type="sequence conflict" description="In Ref. 3; CAA44466." evidence="7" ref="3">
    <original>Y</original>
    <variation>F</variation>
    <location>
        <position position="947"/>
    </location>
</feature>
<comment type="function">
    <text evidence="2 7">Activates ubiquitin by first adenylating its C-terminal glycine residue with ATP, and thereafter linking this residue to the side chain of a cysteine residue in E1, yielding a ubiquitin-E1 thioester and free AMP (By similarity). The Y chromosome form could be involved in the survival and proliferation of differentiating spermatogonia.</text>
</comment>
<comment type="catalytic activity">
    <reaction evidence="2">
        <text>ATP + ubiquitin + [E1 ubiquitin-activating enzyme]-L-cysteine = AMP + diphosphate + S-ubiquitinyl-[E1 ubiquitin-activating enzyme]-L-cysteine.</text>
        <dbReference type="EC" id="6.2.1.45"/>
    </reaction>
</comment>
<comment type="pathway">
    <text evidence="2">Protein modification; protein ubiquitination.</text>
</comment>
<comment type="subunit">
    <text evidence="1">Monomer.</text>
</comment>
<comment type="tissue specificity">
    <text evidence="6">Expressed in testis in A spermatogonia and spermatids but not (or at very low levels) in pachytene spermatocytes. Also expressed in Y-bearing ovaries and at very low levels in adrenal gland.</text>
</comment>
<comment type="developmental stage">
    <text evidence="6">In testis, expression detected at 12.5 days post coitum (dpc) and peaking at 14.5 dpc, with expression dropping to low levels at the day of birth. After birth, levels increase 4-fold to a peak at 10 days post partum (dpp) and fall again thereafter.</text>
</comment>
<comment type="miscellaneous">
    <text evidence="2">There are two active sites within the E1 molecule, allowing it to accommodate two ubiquitin moieties at a time, with a new ubiquitin forming an adenylate intermediate as the previous one is transferred to the thiol site.</text>
</comment>
<comment type="similarity">
    <text evidence="7">Belongs to the ubiquitin-activating E1 family.</text>
</comment>
<accession>P31254</accession>
<accession>Q60639</accession>
<accession>Q8CDH7</accession>
<accession>Q9QYS4</accession>
<accession>Q9QZX2</accession>
<gene>
    <name type="primary">Uba1y</name>
    <name type="synonym">Sby</name>
    <name type="synonym">Ube1ay</name>
    <name type="synonym">Ube1y</name>
    <name type="synonym">Ube1y1</name>
</gene>
<organism>
    <name type="scientific">Mus musculus</name>
    <name type="common">Mouse</name>
    <dbReference type="NCBI Taxonomy" id="10090"/>
    <lineage>
        <taxon>Eukaryota</taxon>
        <taxon>Metazoa</taxon>
        <taxon>Chordata</taxon>
        <taxon>Craniata</taxon>
        <taxon>Vertebrata</taxon>
        <taxon>Euteleostomi</taxon>
        <taxon>Mammalia</taxon>
        <taxon>Eutheria</taxon>
        <taxon>Euarchontoglires</taxon>
        <taxon>Glires</taxon>
        <taxon>Rodentia</taxon>
        <taxon>Myomorpha</taxon>
        <taxon>Muroidea</taxon>
        <taxon>Muridae</taxon>
        <taxon>Murinae</taxon>
        <taxon>Mus</taxon>
        <taxon>Mus</taxon>
    </lineage>
</organism>
<proteinExistence type="evidence at protein level"/>
<evidence type="ECO:0000250" key="1"/>
<evidence type="ECO:0000250" key="2">
    <source>
        <dbReference type="UniProtKB" id="P22314"/>
    </source>
</evidence>
<evidence type="ECO:0000250" key="3">
    <source>
        <dbReference type="UniProtKB" id="P22515"/>
    </source>
</evidence>
<evidence type="ECO:0000255" key="4">
    <source>
        <dbReference type="PROSITE-ProRule" id="PRU10132"/>
    </source>
</evidence>
<evidence type="ECO:0000256" key="5">
    <source>
        <dbReference type="SAM" id="MobiDB-lite"/>
    </source>
</evidence>
<evidence type="ECO:0000269" key="6">
    <source>
    </source>
</evidence>
<evidence type="ECO:0000305" key="7"/>
<sequence>MSSSVLSKKRKVSGPDSSLDSSWSPTYSVMFGVPPGPTNEMSKNKEMDIDESLYSRQLYVLGHEAMKHLQASSVLISGLQGLGVEIAKNIILGGVKAVTLHDQGIAQWADLSSQFCLREEDIGKNRAEISQPRLAELNSYVPVFAYTGPLIEEFLSGFQVVVLTNTPLEYQLQVGEFCHSHGIKLVVADTRGLVGQLFCDFGEEMILTDSNGEQPLSAMVSMITKENPGIVTCLEDSRHGFESGDFISFTEVQGMSELNGIGPIEIKVLGPYTFSICDTSSFSEYIRGGIVSQVKVPRKINFKPLLASLAEPEFVVTDFAKCCHPAQLHIGFQALHQFCTQHSRPPRPHNEEDAEELVTLAQSVNAQALPAVQQDCLDIDLIRKLAYVAAGDLAPMNAFFGGLAAQEVMKACSGKFMPIRQWLYFDALECLPEHRVAFMEDKCLPHQNRYDGQVAVFGSDLQEKLGKQKYFLVGAGAIGCELLKNFAMIGLGCGEDGEITVTDMDTIEKSNLNRQFLFRPWDITKLKSETAAAAVRDINPHIRIFSHQNRVGPETEHVYDDDFFQKLDGVANALDNVDARLYVDRRCVYYRKPLLESGTLGTKGNVQVVVPFLTESYSSSQDPPEKSIPICTLKNFPNAIEHTVQWARDEFEGLFKQSAENVNQYLTDPKFMERTLQLAGTQPLEVLEAIHCSLVLQRPQTWADCVTWAYQHWHTQYSHNIQQLLHNFPPAQLTSSGALFWSGPKRCPHPLTFDINNPLHLDYVMAAANLFAQTYGLGGSQDCAVVAKLLQSLPVPKFAPKSGIRIHVSEQELQSTSATTIDDSHLEELKTALPTPDKLLGFKMYPIDFEKDDDSNFHMDFIVAASNLRAENYGISPADRHKSKLIAGKIIPAIATTTSAIVGLVCLELYKVVQGHQQLESYKNSFINLALPLFSFSAPLAPECHQYYDQEWTLWDRFDVQGLQPSGEEMTLKQFLDYFKTEHKLEVIMLSQGVSMLYSVFMPASKLKERLDQPMTEIVSCVSKQKLGHHVKSLVFELCCNSDSGDDIEVPYVRYIIR</sequence>
<dbReference type="EC" id="6.2.1.45" evidence="2"/>
<dbReference type="EMBL" id="AF127490">
    <property type="protein sequence ID" value="AAD56603.1"/>
    <property type="molecule type" value="Genomic_DNA"/>
</dbReference>
<dbReference type="EMBL" id="AF127483">
    <property type="protein sequence ID" value="AAD56603.1"/>
    <property type="status" value="JOINED"/>
    <property type="molecule type" value="Genomic_DNA"/>
</dbReference>
<dbReference type="EMBL" id="AF127484">
    <property type="protein sequence ID" value="AAD56603.1"/>
    <property type="status" value="JOINED"/>
    <property type="molecule type" value="Genomic_DNA"/>
</dbReference>
<dbReference type="EMBL" id="AF127485">
    <property type="protein sequence ID" value="AAD56603.1"/>
    <property type="status" value="JOINED"/>
    <property type="molecule type" value="Genomic_DNA"/>
</dbReference>
<dbReference type="EMBL" id="AF127486">
    <property type="protein sequence ID" value="AAD56603.1"/>
    <property type="status" value="JOINED"/>
    <property type="molecule type" value="Genomic_DNA"/>
</dbReference>
<dbReference type="EMBL" id="AF127487">
    <property type="protein sequence ID" value="AAD56603.1"/>
    <property type="status" value="JOINED"/>
    <property type="molecule type" value="Genomic_DNA"/>
</dbReference>
<dbReference type="EMBL" id="AF127488">
    <property type="protein sequence ID" value="AAD56603.1"/>
    <property type="status" value="JOINED"/>
    <property type="molecule type" value="Genomic_DNA"/>
</dbReference>
<dbReference type="EMBL" id="AF127489">
    <property type="protein sequence ID" value="AAD56603.1"/>
    <property type="status" value="JOINED"/>
    <property type="molecule type" value="Genomic_DNA"/>
</dbReference>
<dbReference type="EMBL" id="AF150963">
    <property type="protein sequence ID" value="AAF00149.1"/>
    <property type="molecule type" value="mRNA"/>
</dbReference>
<dbReference type="EMBL" id="AK030031">
    <property type="protein sequence ID" value="BAC26749.1"/>
    <property type="molecule type" value="mRNA"/>
</dbReference>
<dbReference type="EMBL" id="X62581">
    <property type="protein sequence ID" value="CAA44466.1"/>
    <property type="molecule type" value="mRNA"/>
</dbReference>
<dbReference type="EMBL" id="U09052">
    <property type="protein sequence ID" value="AAC52170.1"/>
    <property type="molecule type" value="Genomic_DNA"/>
</dbReference>
<dbReference type="CCDS" id="CCDS30540.1"/>
<dbReference type="PIR" id="I49011">
    <property type="entry name" value="I49011"/>
</dbReference>
<dbReference type="PIR" id="S19712">
    <property type="entry name" value="S19712"/>
</dbReference>
<dbReference type="RefSeq" id="NP_001343972.1">
    <property type="nucleotide sequence ID" value="NM_001357043.1"/>
</dbReference>
<dbReference type="RefSeq" id="NP_035797.1">
    <property type="nucleotide sequence ID" value="NM_011667.2"/>
</dbReference>
<dbReference type="RefSeq" id="XP_006531645.1">
    <property type="nucleotide sequence ID" value="XM_006531582.2"/>
</dbReference>
<dbReference type="SMR" id="P31254"/>
<dbReference type="BioGRID" id="204411">
    <property type="interactions" value="5"/>
</dbReference>
<dbReference type="FunCoup" id="P31254">
    <property type="interactions" value="2100"/>
</dbReference>
<dbReference type="STRING" id="10090.ENSMUSP00000111560"/>
<dbReference type="iPTMnet" id="P31254"/>
<dbReference type="PhosphoSitePlus" id="P31254"/>
<dbReference type="SwissPalm" id="P31254"/>
<dbReference type="jPOST" id="P31254"/>
<dbReference type="PaxDb" id="10090-ENSMUSP00000111560"/>
<dbReference type="PeptideAtlas" id="P31254"/>
<dbReference type="ProteomicsDB" id="297779"/>
<dbReference type="DNASU" id="22202"/>
<dbReference type="Ensembl" id="ENSMUST00000115894.3">
    <property type="protein sequence ID" value="ENSMUSP00000111560.2"/>
    <property type="gene ID" value="ENSMUSG00000069053.12"/>
</dbReference>
<dbReference type="Ensembl" id="ENSMUST00000190013.7">
    <property type="protein sequence ID" value="ENSMUSP00000140543.2"/>
    <property type="gene ID" value="ENSMUSG00000069053.12"/>
</dbReference>
<dbReference type="GeneID" id="22202"/>
<dbReference type="UCSC" id="uc009uyw.1">
    <property type="organism name" value="mouse"/>
</dbReference>
<dbReference type="AGR" id="MGI:98891"/>
<dbReference type="MGI" id="MGI:98891">
    <property type="gene designation" value="Uba1y"/>
</dbReference>
<dbReference type="VEuPathDB" id="HostDB:ENSMUSG00000069053"/>
<dbReference type="eggNOG" id="KOG2012">
    <property type="taxonomic scope" value="Eukaryota"/>
</dbReference>
<dbReference type="GeneTree" id="ENSGT00940000158975"/>
<dbReference type="HOGENOM" id="CLU_002556_0_0_1"/>
<dbReference type="InParanoid" id="P31254"/>
<dbReference type="OMA" id="GEYASAM"/>
<dbReference type="PhylomeDB" id="P31254"/>
<dbReference type="TreeFam" id="TF300586"/>
<dbReference type="UniPathway" id="UPA00143"/>
<dbReference type="BioGRID-ORCS" id="22202">
    <property type="hits" value="2 hits in 75 CRISPR screens"/>
</dbReference>
<dbReference type="ChiTaRS" id="Uba1y-ps1">
    <property type="organism name" value="mouse"/>
</dbReference>
<dbReference type="PRO" id="PR:P31254"/>
<dbReference type="Proteomes" id="UP000000589">
    <property type="component" value="Chromosome Y"/>
</dbReference>
<dbReference type="RNAct" id="P31254">
    <property type="molecule type" value="protein"/>
</dbReference>
<dbReference type="Bgee" id="ENSMUSG00000069053">
    <property type="expression patterns" value="Expressed in spermatid and 13 other cell types or tissues"/>
</dbReference>
<dbReference type="GO" id="GO:0005524">
    <property type="term" value="F:ATP binding"/>
    <property type="evidence" value="ECO:0007669"/>
    <property type="project" value="UniProtKB-KW"/>
</dbReference>
<dbReference type="GO" id="GO:0004839">
    <property type="term" value="F:ubiquitin activating enzyme activity"/>
    <property type="evidence" value="ECO:0000315"/>
    <property type="project" value="MGI"/>
</dbReference>
<dbReference type="CDD" id="cd01491">
    <property type="entry name" value="Ube1_repeat1"/>
    <property type="match status" value="1"/>
</dbReference>
<dbReference type="CDD" id="cd01490">
    <property type="entry name" value="Ube1_repeat2"/>
    <property type="match status" value="1"/>
</dbReference>
<dbReference type="FunFam" id="1.10.10.2660:FF:000001">
    <property type="entry name" value="Ubiquitin-activating enzyme E1 1"/>
    <property type="match status" value="1"/>
</dbReference>
<dbReference type="FunFam" id="3.40.50.12550:FF:000001">
    <property type="entry name" value="Ubiquitin-activating enzyme E1 1"/>
    <property type="match status" value="1"/>
</dbReference>
<dbReference type="FunFam" id="3.40.50.720:FF:000015">
    <property type="entry name" value="Ubiquitin-activating enzyme E1 1"/>
    <property type="match status" value="1"/>
</dbReference>
<dbReference type="FunFam" id="3.10.290.60:FF:000002">
    <property type="entry name" value="Ubiquitin-like modifier-activating enzyme 1"/>
    <property type="match status" value="1"/>
</dbReference>
<dbReference type="FunFam" id="2.40.30.180:FF:000001">
    <property type="entry name" value="ubiquitin-like modifier-activating enzyme 1"/>
    <property type="match status" value="1"/>
</dbReference>
<dbReference type="FunFam" id="3.50.50.80:FF:000001">
    <property type="entry name" value="ubiquitin-like modifier-activating enzyme 1"/>
    <property type="match status" value="1"/>
</dbReference>
<dbReference type="Gene3D" id="3.40.50.720">
    <property type="entry name" value="NAD(P)-binding Rossmann-like Domain"/>
    <property type="match status" value="1"/>
</dbReference>
<dbReference type="Gene3D" id="2.40.30.180">
    <property type="entry name" value="Ubiquitin-activating enzyme E1, FCCH domain"/>
    <property type="match status" value="1"/>
</dbReference>
<dbReference type="Gene3D" id="3.50.50.80">
    <property type="entry name" value="Ubiquitin-activating enzyme E1, inactive adenylation domain, subdomain 1"/>
    <property type="match status" value="1"/>
</dbReference>
<dbReference type="Gene3D" id="3.40.50.12550">
    <property type="entry name" value="Ubiquitin-activating enzyme E1, inactive adenylation domain, subdomain 2"/>
    <property type="match status" value="1"/>
</dbReference>
<dbReference type="Gene3D" id="1.10.10.2660">
    <property type="entry name" value="Ubiquitin-activating enzyme E1, SCCH domain"/>
    <property type="match status" value="1"/>
</dbReference>
<dbReference type="Gene3D" id="3.10.290.60">
    <property type="entry name" value="Ubiquitin-activating enzyme E1, UFD domain"/>
    <property type="match status" value="1"/>
</dbReference>
<dbReference type="InterPro" id="IPR032420">
    <property type="entry name" value="E1_4HB"/>
</dbReference>
<dbReference type="InterPro" id="IPR032418">
    <property type="entry name" value="E1_FCCH"/>
</dbReference>
<dbReference type="InterPro" id="IPR042302">
    <property type="entry name" value="E1_FCCH_sf"/>
</dbReference>
<dbReference type="InterPro" id="IPR045886">
    <property type="entry name" value="ThiF/MoeB/HesA"/>
</dbReference>
<dbReference type="InterPro" id="IPR000594">
    <property type="entry name" value="ThiF_NAD_FAD-bd"/>
</dbReference>
<dbReference type="InterPro" id="IPR018965">
    <property type="entry name" value="Ub-activating_enz_E1_C"/>
</dbReference>
<dbReference type="InterPro" id="IPR042449">
    <property type="entry name" value="Ub-E1_IAD_1"/>
</dbReference>
<dbReference type="InterPro" id="IPR038252">
    <property type="entry name" value="UBA_E1_C_sf"/>
</dbReference>
<dbReference type="InterPro" id="IPR019572">
    <property type="entry name" value="UBA_E1_SCCH"/>
</dbReference>
<dbReference type="InterPro" id="IPR042063">
    <property type="entry name" value="Ubi_acti_E1_SCCH"/>
</dbReference>
<dbReference type="InterPro" id="IPR035985">
    <property type="entry name" value="Ubiquitin-activating_enz"/>
</dbReference>
<dbReference type="InterPro" id="IPR018075">
    <property type="entry name" value="UBQ-activ_enz_E1"/>
</dbReference>
<dbReference type="InterPro" id="IPR018074">
    <property type="entry name" value="UBQ-activ_enz_E1_CS"/>
</dbReference>
<dbReference type="InterPro" id="IPR033127">
    <property type="entry name" value="UBQ-activ_enz_E1_Cys_AS"/>
</dbReference>
<dbReference type="InterPro" id="IPR000011">
    <property type="entry name" value="UBQ/SUMO-activ_enz_E1-like"/>
</dbReference>
<dbReference type="NCBIfam" id="TIGR01408">
    <property type="entry name" value="Ube1"/>
    <property type="match status" value="1"/>
</dbReference>
<dbReference type="PANTHER" id="PTHR10953:SF162">
    <property type="entry name" value="SUMO-ACTIVATING ENZYME SUBUNIT 1"/>
    <property type="match status" value="1"/>
</dbReference>
<dbReference type="PANTHER" id="PTHR10953">
    <property type="entry name" value="UBIQUITIN-ACTIVATING ENZYME E1"/>
    <property type="match status" value="1"/>
</dbReference>
<dbReference type="Pfam" id="PF16191">
    <property type="entry name" value="E1_4HB"/>
    <property type="match status" value="1"/>
</dbReference>
<dbReference type="Pfam" id="PF16190">
    <property type="entry name" value="E1_FCCH"/>
    <property type="match status" value="1"/>
</dbReference>
<dbReference type="Pfam" id="PF09358">
    <property type="entry name" value="E1_UFD"/>
    <property type="match status" value="1"/>
</dbReference>
<dbReference type="Pfam" id="PF00899">
    <property type="entry name" value="ThiF"/>
    <property type="match status" value="2"/>
</dbReference>
<dbReference type="Pfam" id="PF10585">
    <property type="entry name" value="UBA_E1_SCCH"/>
    <property type="match status" value="1"/>
</dbReference>
<dbReference type="PRINTS" id="PR01849">
    <property type="entry name" value="UBIQUITINACT"/>
</dbReference>
<dbReference type="SMART" id="SM00985">
    <property type="entry name" value="UBA_e1_C"/>
    <property type="match status" value="1"/>
</dbReference>
<dbReference type="SUPFAM" id="SSF69572">
    <property type="entry name" value="Activating enzymes of the ubiquitin-like proteins"/>
    <property type="match status" value="2"/>
</dbReference>
<dbReference type="PROSITE" id="PS00536">
    <property type="entry name" value="UBIQUITIN_ACTIVAT_1"/>
    <property type="match status" value="1"/>
</dbReference>
<dbReference type="PROSITE" id="PS00865">
    <property type="entry name" value="UBIQUITIN_ACTIVAT_2"/>
    <property type="match status" value="1"/>
</dbReference>